<gene>
    <name evidence="1" type="primary">kdsB</name>
    <name type="ordered locus">NMA0875</name>
</gene>
<keyword id="KW-0963">Cytoplasm</keyword>
<keyword id="KW-0448">Lipopolysaccharide biosynthesis</keyword>
<keyword id="KW-0548">Nucleotidyltransferase</keyword>
<keyword id="KW-0808">Transferase</keyword>
<reference key="1">
    <citation type="journal article" date="2000" name="Nature">
        <title>Complete DNA sequence of a serogroup A strain of Neisseria meningitidis Z2491.</title>
        <authorList>
            <person name="Parkhill J."/>
            <person name="Achtman M."/>
            <person name="James K.D."/>
            <person name="Bentley S.D."/>
            <person name="Churcher C.M."/>
            <person name="Klee S.R."/>
            <person name="Morelli G."/>
            <person name="Basham D."/>
            <person name="Brown D."/>
            <person name="Chillingworth T."/>
            <person name="Davies R.M."/>
            <person name="Davis P."/>
            <person name="Devlin K."/>
            <person name="Feltwell T."/>
            <person name="Hamlin N."/>
            <person name="Holroyd S."/>
            <person name="Jagels K."/>
            <person name="Leather S."/>
            <person name="Moule S."/>
            <person name="Mungall K.L."/>
            <person name="Quail M.A."/>
            <person name="Rajandream M.A."/>
            <person name="Rutherford K.M."/>
            <person name="Simmonds M."/>
            <person name="Skelton J."/>
            <person name="Whitehead S."/>
            <person name="Spratt B.G."/>
            <person name="Barrell B.G."/>
        </authorList>
    </citation>
    <scope>NUCLEOTIDE SEQUENCE [LARGE SCALE GENOMIC DNA]</scope>
    <source>
        <strain>DSM 15465 / Z2491</strain>
    </source>
</reference>
<comment type="function">
    <text evidence="1">Activates KDO (a required 8-carbon sugar) for incorporation into bacterial lipopolysaccharide in Gram-negative bacteria.</text>
</comment>
<comment type="catalytic activity">
    <reaction evidence="1">
        <text>3-deoxy-alpha-D-manno-oct-2-ulosonate + CTP = CMP-3-deoxy-beta-D-manno-octulosonate + diphosphate</text>
        <dbReference type="Rhea" id="RHEA:23448"/>
        <dbReference type="ChEBI" id="CHEBI:33019"/>
        <dbReference type="ChEBI" id="CHEBI:37563"/>
        <dbReference type="ChEBI" id="CHEBI:85986"/>
        <dbReference type="ChEBI" id="CHEBI:85987"/>
        <dbReference type="EC" id="2.7.7.38"/>
    </reaction>
</comment>
<comment type="pathway">
    <text evidence="1">Nucleotide-sugar biosynthesis; CMP-3-deoxy-D-manno-octulosonate biosynthesis; CMP-3-deoxy-D-manno-octulosonate from 3-deoxy-D-manno-octulosonate and CTP: step 1/1.</text>
</comment>
<comment type="pathway">
    <text evidence="1">Bacterial outer membrane biogenesis; lipopolysaccharide biosynthesis.</text>
</comment>
<comment type="subcellular location">
    <subcellularLocation>
        <location evidence="1">Cytoplasm</location>
    </subcellularLocation>
</comment>
<comment type="similarity">
    <text evidence="1">Belongs to the KdsB family.</text>
</comment>
<organism>
    <name type="scientific">Neisseria meningitidis serogroup A / serotype 4A (strain DSM 15465 / Z2491)</name>
    <dbReference type="NCBI Taxonomy" id="122587"/>
    <lineage>
        <taxon>Bacteria</taxon>
        <taxon>Pseudomonadati</taxon>
        <taxon>Pseudomonadota</taxon>
        <taxon>Betaproteobacteria</taxon>
        <taxon>Neisseriales</taxon>
        <taxon>Neisseriaceae</taxon>
        <taxon>Neisseria</taxon>
    </lineage>
</organism>
<protein>
    <recommendedName>
        <fullName evidence="1">3-deoxy-manno-octulosonate cytidylyltransferase</fullName>
        <ecNumber evidence="1">2.7.7.38</ecNumber>
    </recommendedName>
    <alternativeName>
        <fullName evidence="1">CMP-2-keto-3-deoxyoctulosonic acid synthase</fullName>
        <shortName evidence="1">CKS</shortName>
        <shortName evidence="1">CMP-KDO synthase</shortName>
    </alternativeName>
</protein>
<name>KDSB_NEIMA</name>
<accession>A1IQS6</accession>
<proteinExistence type="inferred from homology"/>
<feature type="chain" id="PRO_0000370103" description="3-deoxy-manno-octulosonate cytidylyltransferase">
    <location>
        <begin position="1"/>
        <end position="253"/>
    </location>
</feature>
<dbReference type="EC" id="2.7.7.38" evidence="1"/>
<dbReference type="EMBL" id="AL157959">
    <property type="protein sequence ID" value="CAM08110.1"/>
    <property type="molecule type" value="Genomic_DNA"/>
</dbReference>
<dbReference type="PIR" id="F81933">
    <property type="entry name" value="F81933"/>
</dbReference>
<dbReference type="RefSeq" id="WP_002231990.1">
    <property type="nucleotide sequence ID" value="NC_003116.1"/>
</dbReference>
<dbReference type="SMR" id="A1IQS6"/>
<dbReference type="EnsemblBacteria" id="CAM08110">
    <property type="protein sequence ID" value="CAM08110"/>
    <property type="gene ID" value="NMA0875"/>
</dbReference>
<dbReference type="GeneID" id="93386501"/>
<dbReference type="KEGG" id="nma:NMA0875"/>
<dbReference type="HOGENOM" id="CLU_065038_1_0_4"/>
<dbReference type="UniPathway" id="UPA00030"/>
<dbReference type="UniPathway" id="UPA00358">
    <property type="reaction ID" value="UER00476"/>
</dbReference>
<dbReference type="Proteomes" id="UP000000626">
    <property type="component" value="Chromosome"/>
</dbReference>
<dbReference type="GO" id="GO:0005829">
    <property type="term" value="C:cytosol"/>
    <property type="evidence" value="ECO:0007669"/>
    <property type="project" value="TreeGrafter"/>
</dbReference>
<dbReference type="GO" id="GO:0008690">
    <property type="term" value="F:3-deoxy-manno-octulosonate cytidylyltransferase activity"/>
    <property type="evidence" value="ECO:0007669"/>
    <property type="project" value="UniProtKB-UniRule"/>
</dbReference>
<dbReference type="GO" id="GO:0033468">
    <property type="term" value="P:CMP-keto-3-deoxy-D-manno-octulosonic acid biosynthetic process"/>
    <property type="evidence" value="ECO:0007669"/>
    <property type="project" value="UniProtKB-UniRule"/>
</dbReference>
<dbReference type="GO" id="GO:0009103">
    <property type="term" value="P:lipopolysaccharide biosynthetic process"/>
    <property type="evidence" value="ECO:0007669"/>
    <property type="project" value="UniProtKB-UniRule"/>
</dbReference>
<dbReference type="CDD" id="cd02517">
    <property type="entry name" value="CMP-KDO-Synthetase"/>
    <property type="match status" value="1"/>
</dbReference>
<dbReference type="FunFam" id="3.90.550.10:FF:000011">
    <property type="entry name" value="3-deoxy-manno-octulosonate cytidylyltransferase"/>
    <property type="match status" value="1"/>
</dbReference>
<dbReference type="Gene3D" id="3.90.550.10">
    <property type="entry name" value="Spore Coat Polysaccharide Biosynthesis Protein SpsA, Chain A"/>
    <property type="match status" value="1"/>
</dbReference>
<dbReference type="HAMAP" id="MF_00057">
    <property type="entry name" value="KdsB"/>
    <property type="match status" value="1"/>
</dbReference>
<dbReference type="InterPro" id="IPR003329">
    <property type="entry name" value="Cytidylyl_trans"/>
</dbReference>
<dbReference type="InterPro" id="IPR004528">
    <property type="entry name" value="KdsB"/>
</dbReference>
<dbReference type="InterPro" id="IPR029044">
    <property type="entry name" value="Nucleotide-diphossugar_trans"/>
</dbReference>
<dbReference type="NCBIfam" id="TIGR00466">
    <property type="entry name" value="kdsB"/>
    <property type="match status" value="1"/>
</dbReference>
<dbReference type="NCBIfam" id="NF003952">
    <property type="entry name" value="PRK05450.1-5"/>
    <property type="match status" value="1"/>
</dbReference>
<dbReference type="NCBIfam" id="NF009905">
    <property type="entry name" value="PRK13368.1"/>
    <property type="match status" value="1"/>
</dbReference>
<dbReference type="PANTHER" id="PTHR42866">
    <property type="entry name" value="3-DEOXY-MANNO-OCTULOSONATE CYTIDYLYLTRANSFERASE"/>
    <property type="match status" value="1"/>
</dbReference>
<dbReference type="PANTHER" id="PTHR42866:SF2">
    <property type="entry name" value="3-DEOXY-MANNO-OCTULOSONATE CYTIDYLYLTRANSFERASE, MITOCHONDRIAL"/>
    <property type="match status" value="1"/>
</dbReference>
<dbReference type="Pfam" id="PF02348">
    <property type="entry name" value="CTP_transf_3"/>
    <property type="match status" value="1"/>
</dbReference>
<dbReference type="SUPFAM" id="SSF53448">
    <property type="entry name" value="Nucleotide-diphospho-sugar transferases"/>
    <property type="match status" value="1"/>
</dbReference>
<evidence type="ECO:0000255" key="1">
    <source>
        <dbReference type="HAMAP-Rule" id="MF_00057"/>
    </source>
</evidence>
<sequence length="253" mass="27794">MTEFVVLIPARLDSSRLPGKALADIHGKPMVVRVAEQAAKSKAARVVVATDHPDIQTVCQAHGIEAVMTSNRHESGTTRLAEAAAALKLPPHLVVVNVQGDEPLIAPELIDRTAEVLVENNVQMATAAHELHDFDELMNPNAVKVVLDKNRNAIYFSRAPIPYPRDAMRAGKREMPSETAVLRHIGIYAYRAGFLQRYAEMSVSPLETIESLEQLRVLWHGYPIAVETAKEAPAAGVDTQEDLDRVRAVFQTV</sequence>